<dbReference type="EMBL" id="BA000031">
    <property type="protein sequence ID" value="BAC60940.1"/>
    <property type="molecule type" value="Genomic_DNA"/>
</dbReference>
<dbReference type="RefSeq" id="NP_799056.1">
    <property type="nucleotide sequence ID" value="NC_004603.1"/>
</dbReference>
<dbReference type="SMR" id="Q87LD5"/>
<dbReference type="GeneID" id="1190222"/>
<dbReference type="KEGG" id="vpa:VP2677"/>
<dbReference type="PATRIC" id="fig|223926.6.peg.2572"/>
<dbReference type="eggNOG" id="COG3028">
    <property type="taxonomic scope" value="Bacteria"/>
</dbReference>
<dbReference type="HOGENOM" id="CLU_106757_2_0_6"/>
<dbReference type="Proteomes" id="UP000002493">
    <property type="component" value="Chromosome 1"/>
</dbReference>
<dbReference type="GO" id="GO:0005829">
    <property type="term" value="C:cytosol"/>
    <property type="evidence" value="ECO:0007669"/>
    <property type="project" value="TreeGrafter"/>
</dbReference>
<dbReference type="GO" id="GO:0043022">
    <property type="term" value="F:ribosome binding"/>
    <property type="evidence" value="ECO:0007669"/>
    <property type="project" value="UniProtKB-UniRule"/>
</dbReference>
<dbReference type="GO" id="GO:0019843">
    <property type="term" value="F:rRNA binding"/>
    <property type="evidence" value="ECO:0007669"/>
    <property type="project" value="UniProtKB-UniRule"/>
</dbReference>
<dbReference type="GO" id="GO:1902626">
    <property type="term" value="P:assembly of large subunit precursor of preribosome"/>
    <property type="evidence" value="ECO:0007669"/>
    <property type="project" value="UniProtKB-UniRule"/>
</dbReference>
<dbReference type="CDD" id="cd16331">
    <property type="entry name" value="YjgA-like"/>
    <property type="match status" value="1"/>
</dbReference>
<dbReference type="FunFam" id="1.10.60.30:FF:000002">
    <property type="entry name" value="UPF0307 protein YjgA"/>
    <property type="match status" value="1"/>
</dbReference>
<dbReference type="Gene3D" id="1.10.60.30">
    <property type="entry name" value="PSPTO4464-like domains"/>
    <property type="match status" value="2"/>
</dbReference>
<dbReference type="HAMAP" id="MF_00765">
    <property type="entry name" value="DarP"/>
    <property type="match status" value="1"/>
</dbReference>
<dbReference type="InterPro" id="IPR006839">
    <property type="entry name" value="DarP"/>
</dbReference>
<dbReference type="InterPro" id="IPR023153">
    <property type="entry name" value="DarP_sf"/>
</dbReference>
<dbReference type="NCBIfam" id="NF003593">
    <property type="entry name" value="PRK05255.1-1"/>
    <property type="match status" value="1"/>
</dbReference>
<dbReference type="PANTHER" id="PTHR38101">
    <property type="entry name" value="UPF0307 PROTEIN YJGA"/>
    <property type="match status" value="1"/>
</dbReference>
<dbReference type="PANTHER" id="PTHR38101:SF1">
    <property type="entry name" value="UPF0307 PROTEIN YJGA"/>
    <property type="match status" value="1"/>
</dbReference>
<dbReference type="Pfam" id="PF04751">
    <property type="entry name" value="DarP"/>
    <property type="match status" value="1"/>
</dbReference>
<dbReference type="PIRSF" id="PIRSF016183">
    <property type="entry name" value="UCP016183"/>
    <property type="match status" value="1"/>
</dbReference>
<dbReference type="SUPFAM" id="SSF158710">
    <property type="entry name" value="PSPTO4464-like"/>
    <property type="match status" value="1"/>
</dbReference>
<comment type="function">
    <text evidence="1">Member of a network of 50S ribosomal subunit biogenesis factors which assembles along the 30S-50S interface, preventing incorrect 23S rRNA structures from forming. Promotes peptidyl transferase center (PTC) maturation.</text>
</comment>
<comment type="subcellular location">
    <subcellularLocation>
        <location evidence="1">Cytoplasm</location>
    </subcellularLocation>
    <text evidence="1">Associates with late stage pre-50S ribosomal subunits.</text>
</comment>
<comment type="similarity">
    <text evidence="1">Belongs to the DarP family.</text>
</comment>
<gene>
    <name evidence="1" type="primary">darP</name>
    <name type="ordered locus">VP2677</name>
</gene>
<proteinExistence type="inferred from homology"/>
<reference key="1">
    <citation type="journal article" date="2003" name="Lancet">
        <title>Genome sequence of Vibrio parahaemolyticus: a pathogenic mechanism distinct from that of V. cholerae.</title>
        <authorList>
            <person name="Makino K."/>
            <person name="Oshima K."/>
            <person name="Kurokawa K."/>
            <person name="Yokoyama K."/>
            <person name="Uda T."/>
            <person name="Tagomori K."/>
            <person name="Iijima Y."/>
            <person name="Najima M."/>
            <person name="Nakano M."/>
            <person name="Yamashita A."/>
            <person name="Kubota Y."/>
            <person name="Kimura S."/>
            <person name="Yasunaga T."/>
            <person name="Honda T."/>
            <person name="Shinagawa H."/>
            <person name="Hattori M."/>
            <person name="Iida T."/>
        </authorList>
    </citation>
    <scope>NUCLEOTIDE SEQUENCE [LARGE SCALE GENOMIC DNA]</scope>
    <source>
        <strain>RIMD 2210633</strain>
    </source>
</reference>
<name>DARP_VIBPA</name>
<sequence>MARKNQKAPWEPEEEIIWVSKSEMKRDMEELQKLGEELVGLKPAVLEKFPLSEDLREAIADAQRFKNEARRRQLQRIGKLMRYEDPEPIQAALDKVRNKHSQATAALHKLEMLRDRVVEEGDKAIDDVMELYPEADRQRLRQLARQAAKEKKAGKPAKSYREIFQILKALNEEEI</sequence>
<organism>
    <name type="scientific">Vibrio parahaemolyticus serotype O3:K6 (strain RIMD 2210633)</name>
    <dbReference type="NCBI Taxonomy" id="223926"/>
    <lineage>
        <taxon>Bacteria</taxon>
        <taxon>Pseudomonadati</taxon>
        <taxon>Pseudomonadota</taxon>
        <taxon>Gammaproteobacteria</taxon>
        <taxon>Vibrionales</taxon>
        <taxon>Vibrionaceae</taxon>
        <taxon>Vibrio</taxon>
    </lineage>
</organism>
<keyword id="KW-0963">Cytoplasm</keyword>
<keyword id="KW-0690">Ribosome biogenesis</keyword>
<keyword id="KW-0694">RNA-binding</keyword>
<keyword id="KW-0699">rRNA-binding</keyword>
<accession>Q87LD5</accession>
<protein>
    <recommendedName>
        <fullName evidence="1">Dual-action ribosomal maturation protein DarP</fullName>
    </recommendedName>
    <alternativeName>
        <fullName evidence="1">Large ribosomal subunit assembly factor DarP</fullName>
    </alternativeName>
</protein>
<feature type="chain" id="PRO_0000208232" description="Dual-action ribosomal maturation protein DarP">
    <location>
        <begin position="1"/>
        <end position="175"/>
    </location>
</feature>
<evidence type="ECO:0000255" key="1">
    <source>
        <dbReference type="HAMAP-Rule" id="MF_00765"/>
    </source>
</evidence>